<comment type="similarity">
    <text evidence="1">Belongs to the UPF0401 family.</text>
</comment>
<organism>
    <name type="scientific">Yersinia pestis bv. Antiqua (strain Antiqua)</name>
    <dbReference type="NCBI Taxonomy" id="360102"/>
    <lineage>
        <taxon>Bacteria</taxon>
        <taxon>Pseudomonadati</taxon>
        <taxon>Pseudomonadota</taxon>
        <taxon>Gammaproteobacteria</taxon>
        <taxon>Enterobacterales</taxon>
        <taxon>Yersiniaceae</taxon>
        <taxon>Yersinia</taxon>
    </lineage>
</organism>
<proteinExistence type="inferred from homology"/>
<name>YUBL_YERPA</name>
<feature type="chain" id="PRO_0000268756" description="UPF0401 protein YubL">
    <location>
        <begin position="1"/>
        <end position="76"/>
    </location>
</feature>
<reference key="1">
    <citation type="journal article" date="2006" name="J. Bacteriol.">
        <title>Complete genome sequence of Yersinia pestis strains Antiqua and Nepal516: evidence of gene reduction in an emerging pathogen.</title>
        <authorList>
            <person name="Chain P.S.G."/>
            <person name="Hu P."/>
            <person name="Malfatti S.A."/>
            <person name="Radnedge L."/>
            <person name="Larimer F."/>
            <person name="Vergez L.M."/>
            <person name="Worsham P."/>
            <person name="Chu M.C."/>
            <person name="Andersen G.L."/>
        </authorList>
    </citation>
    <scope>NUCLEOTIDE SEQUENCE [LARGE SCALE GENOMIC DNA]</scope>
    <source>
        <strain>Antiqua</strain>
    </source>
</reference>
<geneLocation type="plasmid">
    <name>pMT</name>
</geneLocation>
<accession>Q1BZY8</accession>
<gene>
    <name type="primary">yubL</name>
    <name type="ordered locus">YPA_MT0089</name>
</gene>
<sequence length="76" mass="8807">MSEALAVLPDDTFTREQAEVVAAQYTNVAIEDDQGAHFRLVVRQNGEMVWRTWNFEPGGTYWLNRYIADYGIRKPQ</sequence>
<protein>
    <recommendedName>
        <fullName>UPF0401 protein YubL</fullName>
    </recommendedName>
</protein>
<keyword id="KW-0614">Plasmid</keyword>
<evidence type="ECO:0000305" key="1"/>
<dbReference type="EMBL" id="CP000309">
    <property type="protein sequence ID" value="ABG16225.1"/>
    <property type="molecule type" value="Genomic_DNA"/>
</dbReference>
<dbReference type="RefSeq" id="WP_002211745.1">
    <property type="nucleotide sequence ID" value="NZ_CP009904.1"/>
</dbReference>
<dbReference type="SMR" id="Q1BZY8"/>
<dbReference type="KEGG" id="ypa:YPA_MT0089"/>
<dbReference type="Proteomes" id="UP000001971">
    <property type="component" value="Plasmid pMT"/>
</dbReference>
<dbReference type="Gene3D" id="3.30.160.130">
    <property type="entry name" value="ykff protein like domains"/>
    <property type="match status" value="1"/>
</dbReference>
<dbReference type="InterPro" id="IPR009253">
    <property type="entry name" value="DUF905"/>
</dbReference>
<dbReference type="InterPro" id="IPR038612">
    <property type="entry name" value="YkfF-like_sf"/>
</dbReference>
<dbReference type="Pfam" id="PF06006">
    <property type="entry name" value="DUF905"/>
    <property type="match status" value="1"/>
</dbReference>
<dbReference type="SUPFAM" id="SSF54786">
    <property type="entry name" value="YcfA/nrd intein domain"/>
    <property type="match status" value="1"/>
</dbReference>